<accession>Q030F9</accession>
<dbReference type="EC" id="3.1.26.3" evidence="1"/>
<dbReference type="EMBL" id="CP000425">
    <property type="protein sequence ID" value="ABJ72413.1"/>
    <property type="molecule type" value="Genomic_DNA"/>
</dbReference>
<dbReference type="RefSeq" id="WP_011675938.1">
    <property type="nucleotide sequence ID" value="NC_008527.1"/>
</dbReference>
<dbReference type="SMR" id="Q030F9"/>
<dbReference type="GeneID" id="61109069"/>
<dbReference type="KEGG" id="llc:LACR_0862"/>
<dbReference type="HOGENOM" id="CLU_000907_1_3_9"/>
<dbReference type="Proteomes" id="UP000000240">
    <property type="component" value="Chromosome"/>
</dbReference>
<dbReference type="GO" id="GO:0005737">
    <property type="term" value="C:cytoplasm"/>
    <property type="evidence" value="ECO:0007669"/>
    <property type="project" value="UniProtKB-SubCell"/>
</dbReference>
<dbReference type="GO" id="GO:0003725">
    <property type="term" value="F:double-stranded RNA binding"/>
    <property type="evidence" value="ECO:0007669"/>
    <property type="project" value="TreeGrafter"/>
</dbReference>
<dbReference type="GO" id="GO:0046872">
    <property type="term" value="F:metal ion binding"/>
    <property type="evidence" value="ECO:0007669"/>
    <property type="project" value="UniProtKB-KW"/>
</dbReference>
<dbReference type="GO" id="GO:0004525">
    <property type="term" value="F:ribonuclease III activity"/>
    <property type="evidence" value="ECO:0007669"/>
    <property type="project" value="UniProtKB-UniRule"/>
</dbReference>
<dbReference type="GO" id="GO:0019843">
    <property type="term" value="F:rRNA binding"/>
    <property type="evidence" value="ECO:0007669"/>
    <property type="project" value="UniProtKB-KW"/>
</dbReference>
<dbReference type="GO" id="GO:0006397">
    <property type="term" value="P:mRNA processing"/>
    <property type="evidence" value="ECO:0007669"/>
    <property type="project" value="UniProtKB-UniRule"/>
</dbReference>
<dbReference type="GO" id="GO:0010468">
    <property type="term" value="P:regulation of gene expression"/>
    <property type="evidence" value="ECO:0007669"/>
    <property type="project" value="TreeGrafter"/>
</dbReference>
<dbReference type="GO" id="GO:0006364">
    <property type="term" value="P:rRNA processing"/>
    <property type="evidence" value="ECO:0007669"/>
    <property type="project" value="UniProtKB-UniRule"/>
</dbReference>
<dbReference type="GO" id="GO:0008033">
    <property type="term" value="P:tRNA processing"/>
    <property type="evidence" value="ECO:0007669"/>
    <property type="project" value="UniProtKB-KW"/>
</dbReference>
<dbReference type="CDD" id="cd10845">
    <property type="entry name" value="DSRM_RNAse_III_family"/>
    <property type="match status" value="1"/>
</dbReference>
<dbReference type="CDD" id="cd00593">
    <property type="entry name" value="RIBOc"/>
    <property type="match status" value="1"/>
</dbReference>
<dbReference type="FunFam" id="1.10.1520.10:FF:000001">
    <property type="entry name" value="Ribonuclease 3"/>
    <property type="match status" value="1"/>
</dbReference>
<dbReference type="FunFam" id="3.30.160.20:FF:000003">
    <property type="entry name" value="Ribonuclease 3"/>
    <property type="match status" value="1"/>
</dbReference>
<dbReference type="Gene3D" id="3.30.160.20">
    <property type="match status" value="1"/>
</dbReference>
<dbReference type="Gene3D" id="1.10.1520.10">
    <property type="entry name" value="Ribonuclease III domain"/>
    <property type="match status" value="1"/>
</dbReference>
<dbReference type="HAMAP" id="MF_00104">
    <property type="entry name" value="RNase_III"/>
    <property type="match status" value="1"/>
</dbReference>
<dbReference type="InterPro" id="IPR014720">
    <property type="entry name" value="dsRBD_dom"/>
</dbReference>
<dbReference type="InterPro" id="IPR011907">
    <property type="entry name" value="RNase_III"/>
</dbReference>
<dbReference type="InterPro" id="IPR000999">
    <property type="entry name" value="RNase_III_dom"/>
</dbReference>
<dbReference type="InterPro" id="IPR036389">
    <property type="entry name" value="RNase_III_sf"/>
</dbReference>
<dbReference type="NCBIfam" id="TIGR02191">
    <property type="entry name" value="RNaseIII"/>
    <property type="match status" value="1"/>
</dbReference>
<dbReference type="PANTHER" id="PTHR11207:SF0">
    <property type="entry name" value="RIBONUCLEASE 3"/>
    <property type="match status" value="1"/>
</dbReference>
<dbReference type="PANTHER" id="PTHR11207">
    <property type="entry name" value="RIBONUCLEASE III"/>
    <property type="match status" value="1"/>
</dbReference>
<dbReference type="Pfam" id="PF00035">
    <property type="entry name" value="dsrm"/>
    <property type="match status" value="1"/>
</dbReference>
<dbReference type="Pfam" id="PF14622">
    <property type="entry name" value="Ribonucleas_3_3"/>
    <property type="match status" value="1"/>
</dbReference>
<dbReference type="SMART" id="SM00358">
    <property type="entry name" value="DSRM"/>
    <property type="match status" value="1"/>
</dbReference>
<dbReference type="SMART" id="SM00535">
    <property type="entry name" value="RIBOc"/>
    <property type="match status" value="1"/>
</dbReference>
<dbReference type="SUPFAM" id="SSF54768">
    <property type="entry name" value="dsRNA-binding domain-like"/>
    <property type="match status" value="1"/>
</dbReference>
<dbReference type="SUPFAM" id="SSF69065">
    <property type="entry name" value="RNase III domain-like"/>
    <property type="match status" value="1"/>
</dbReference>
<dbReference type="PROSITE" id="PS50137">
    <property type="entry name" value="DS_RBD"/>
    <property type="match status" value="1"/>
</dbReference>
<dbReference type="PROSITE" id="PS50142">
    <property type="entry name" value="RNASE_3_2"/>
    <property type="match status" value="1"/>
</dbReference>
<reference key="1">
    <citation type="journal article" date="2006" name="Proc. Natl. Acad. Sci. U.S.A.">
        <title>Comparative genomics of the lactic acid bacteria.</title>
        <authorList>
            <person name="Makarova K.S."/>
            <person name="Slesarev A."/>
            <person name="Wolf Y.I."/>
            <person name="Sorokin A."/>
            <person name="Mirkin B."/>
            <person name="Koonin E.V."/>
            <person name="Pavlov A."/>
            <person name="Pavlova N."/>
            <person name="Karamychev V."/>
            <person name="Polouchine N."/>
            <person name="Shakhova V."/>
            <person name="Grigoriev I."/>
            <person name="Lou Y."/>
            <person name="Rohksar D."/>
            <person name="Lucas S."/>
            <person name="Huang K."/>
            <person name="Goodstein D.M."/>
            <person name="Hawkins T."/>
            <person name="Plengvidhya V."/>
            <person name="Welker D."/>
            <person name="Hughes J."/>
            <person name="Goh Y."/>
            <person name="Benson A."/>
            <person name="Baldwin K."/>
            <person name="Lee J.-H."/>
            <person name="Diaz-Muniz I."/>
            <person name="Dosti B."/>
            <person name="Smeianov V."/>
            <person name="Wechter W."/>
            <person name="Barabote R."/>
            <person name="Lorca G."/>
            <person name="Altermann E."/>
            <person name="Barrangou R."/>
            <person name="Ganesan B."/>
            <person name="Xie Y."/>
            <person name="Rawsthorne H."/>
            <person name="Tamir D."/>
            <person name="Parker C."/>
            <person name="Breidt F."/>
            <person name="Broadbent J.R."/>
            <person name="Hutkins R."/>
            <person name="O'Sullivan D."/>
            <person name="Steele J."/>
            <person name="Unlu G."/>
            <person name="Saier M.H. Jr."/>
            <person name="Klaenhammer T."/>
            <person name="Richardson P."/>
            <person name="Kozyavkin S."/>
            <person name="Weimer B.C."/>
            <person name="Mills D.A."/>
        </authorList>
    </citation>
    <scope>NUCLEOTIDE SEQUENCE [LARGE SCALE GENOMIC DNA]</scope>
    <source>
        <strain>SK11</strain>
    </source>
</reference>
<feature type="chain" id="PRO_1000075769" description="Ribonuclease 3">
    <location>
        <begin position="1"/>
        <end position="231"/>
    </location>
</feature>
<feature type="domain" description="RNase III" evidence="1">
    <location>
        <begin position="5"/>
        <end position="134"/>
    </location>
</feature>
<feature type="domain" description="DRBM" evidence="1">
    <location>
        <begin position="160"/>
        <end position="229"/>
    </location>
</feature>
<feature type="active site" evidence="1">
    <location>
        <position position="51"/>
    </location>
</feature>
<feature type="active site" evidence="1">
    <location>
        <position position="123"/>
    </location>
</feature>
<feature type="binding site" evidence="1">
    <location>
        <position position="47"/>
    </location>
    <ligand>
        <name>Mg(2+)</name>
        <dbReference type="ChEBI" id="CHEBI:18420"/>
    </ligand>
</feature>
<feature type="binding site" evidence="1">
    <location>
        <position position="120"/>
    </location>
    <ligand>
        <name>Mg(2+)</name>
        <dbReference type="ChEBI" id="CHEBI:18420"/>
    </ligand>
</feature>
<feature type="binding site" evidence="1">
    <location>
        <position position="123"/>
    </location>
    <ligand>
        <name>Mg(2+)</name>
        <dbReference type="ChEBI" id="CHEBI:18420"/>
    </ligand>
</feature>
<proteinExistence type="inferred from homology"/>
<sequence>MLKLQEKLKNDYGLVFNDEDLLKTAFTHSSFTNEERLPKIANNERLEFLGDVALSLVISDYLYRTYPEKLEGELSKMRSSIVRTESLANFSRSCGFGEFLRLGHGEEKMGGRDRETTLENLFEAFLGALFIDQGMDEVRKFIQHVVIPHVKNDDYVKVIDYKTELQEVLQVGGETTITYNILKEEGPAHDRSFVAAVYNNGKELGRGLGKSKKVAEQKAAENAIKGQNHVS</sequence>
<protein>
    <recommendedName>
        <fullName evidence="1">Ribonuclease 3</fullName>
        <ecNumber evidence="1">3.1.26.3</ecNumber>
    </recommendedName>
    <alternativeName>
        <fullName evidence="1">Ribonuclease III</fullName>
        <shortName evidence="1">RNase III</shortName>
    </alternativeName>
</protein>
<comment type="function">
    <text evidence="1">Digests double-stranded RNA. Involved in the processing of primary rRNA transcript to yield the immediate precursors to the large and small rRNAs (23S and 16S). Processes some mRNAs, and tRNAs when they are encoded in the rRNA operon. Processes pre-crRNA and tracrRNA of type II CRISPR loci if present in the organism.</text>
</comment>
<comment type="catalytic activity">
    <reaction evidence="1">
        <text>Endonucleolytic cleavage to 5'-phosphomonoester.</text>
        <dbReference type="EC" id="3.1.26.3"/>
    </reaction>
</comment>
<comment type="cofactor">
    <cofactor evidence="1">
        <name>Mg(2+)</name>
        <dbReference type="ChEBI" id="CHEBI:18420"/>
    </cofactor>
</comment>
<comment type="subunit">
    <text evidence="1">Homodimer.</text>
</comment>
<comment type="subcellular location">
    <subcellularLocation>
        <location evidence="1">Cytoplasm</location>
    </subcellularLocation>
</comment>
<comment type="similarity">
    <text evidence="1">Belongs to the ribonuclease III family.</text>
</comment>
<evidence type="ECO:0000255" key="1">
    <source>
        <dbReference type="HAMAP-Rule" id="MF_00104"/>
    </source>
</evidence>
<organism>
    <name type="scientific">Lactococcus lactis subsp. cremoris (strain SK11)</name>
    <dbReference type="NCBI Taxonomy" id="272622"/>
    <lineage>
        <taxon>Bacteria</taxon>
        <taxon>Bacillati</taxon>
        <taxon>Bacillota</taxon>
        <taxon>Bacilli</taxon>
        <taxon>Lactobacillales</taxon>
        <taxon>Streptococcaceae</taxon>
        <taxon>Lactococcus</taxon>
        <taxon>Lactococcus cremoris subsp. cremoris</taxon>
    </lineage>
</organism>
<gene>
    <name evidence="1" type="primary">rnc</name>
    <name type="ordered locus">LACR_0862</name>
</gene>
<name>RNC_LACLS</name>
<keyword id="KW-0963">Cytoplasm</keyword>
<keyword id="KW-0255">Endonuclease</keyword>
<keyword id="KW-0378">Hydrolase</keyword>
<keyword id="KW-0460">Magnesium</keyword>
<keyword id="KW-0479">Metal-binding</keyword>
<keyword id="KW-0507">mRNA processing</keyword>
<keyword id="KW-0540">Nuclease</keyword>
<keyword id="KW-0694">RNA-binding</keyword>
<keyword id="KW-0698">rRNA processing</keyword>
<keyword id="KW-0699">rRNA-binding</keyword>
<keyword id="KW-0819">tRNA processing</keyword>